<proteinExistence type="evidence at protein level"/>
<protein>
    <recommendedName>
        <fullName evidence="1">(4S)-4-hydroxy-5-phosphonooxypentane-2,3-dione isomerase</fullName>
        <ecNumber evidence="1">5.3.1.32</ecNumber>
    </recommendedName>
    <alternativeName>
        <fullName evidence="1">Autoinducer 2-degrading protein LsrG</fullName>
        <shortName evidence="1">AI-2-degrading protein LsrG</shortName>
    </alternativeName>
    <alternativeName>
        <fullName evidence="1">Phospho-(S)-4,5-dihydroxy-2,3-pentanedione isomerase</fullName>
    </alternativeName>
    <alternativeName>
        <fullName evidence="1">Phospho-AI-2 isomerase</fullName>
    </alternativeName>
</protein>
<feature type="chain" id="PRO_0000351577" description="(4S)-4-hydroxy-5-phosphonooxypentane-2,3-dione isomerase">
    <location>
        <begin position="1"/>
        <end position="96"/>
    </location>
</feature>
<feature type="domain" description="ABM" evidence="1">
    <location>
        <begin position="2"/>
        <end position="91"/>
    </location>
</feature>
<feature type="sequence conflict" description="In Ref. 3; AAS63922." evidence="2" ref="3">
    <original>M</original>
    <variation>I</variation>
    <location>
        <position position="82"/>
    </location>
</feature>
<feature type="strand" evidence="3">
    <location>
        <begin position="2"/>
        <end position="10"/>
    </location>
</feature>
<feature type="helix" evidence="3">
    <location>
        <begin position="12"/>
        <end position="14"/>
    </location>
</feature>
<feature type="helix" evidence="3">
    <location>
        <begin position="15"/>
        <end position="30"/>
    </location>
</feature>
<feature type="strand" evidence="3">
    <location>
        <begin position="35"/>
        <end position="45"/>
    </location>
</feature>
<feature type="strand" evidence="3">
    <location>
        <begin position="49"/>
        <end position="58"/>
    </location>
</feature>
<feature type="helix" evidence="3">
    <location>
        <begin position="59"/>
        <end position="65"/>
    </location>
</feature>
<feature type="helix" evidence="3">
    <location>
        <begin position="69"/>
        <end position="78"/>
    </location>
</feature>
<feature type="helix" evidence="3">
    <location>
        <begin position="79"/>
        <end position="81"/>
    </location>
</feature>
<feature type="strand" evidence="3">
    <location>
        <begin position="82"/>
        <end position="84"/>
    </location>
</feature>
<feature type="strand" evidence="3">
    <location>
        <begin position="87"/>
        <end position="95"/>
    </location>
</feature>
<accession>Q7CG46</accession>
<accession>Q74PW0</accession>
<sequence>MHVTLVEINVKEDKVDQFIEVFRANHLGSIREAGNLRFDVLRDEHIPTRFYIYEAYTDEAAVAIHKTTPHYLQCVEQLAPLMTGPRKKTVFIGLMP</sequence>
<name>LSRG_YERPE</name>
<comment type="function">
    <text evidence="1">Involved in the degradation of phospho-AI-2, thereby terminating induction of the lsr operon and closing the AI-2 signaling cycle. Catalyzes the conversion of (4S)-4-hydroxy-5-phosphonooxypentane-2,3-dione (P-DPD) to 3-hydroxy-5-phosphonooxypentane-2,4-dione (P-HPD).</text>
</comment>
<comment type="catalytic activity">
    <reaction evidence="1">
        <text>(2S)-2-hydroxy-3,4-dioxopentyl phosphate = 3-hydroxy-2,4-dioxopentyl phosphate</text>
        <dbReference type="Rhea" id="RHEA:44360"/>
        <dbReference type="ChEBI" id="CHEBI:71677"/>
        <dbReference type="ChEBI" id="CHEBI:84359"/>
        <dbReference type="EC" id="5.3.1.32"/>
    </reaction>
</comment>
<comment type="subunit">
    <text evidence="1">Homodimer.</text>
</comment>
<comment type="subcellular location">
    <subcellularLocation>
        <location evidence="1">Cytoplasm</location>
    </subcellularLocation>
</comment>
<comment type="similarity">
    <text evidence="1">Belongs to the LsrG family.</text>
</comment>
<keyword id="KW-0002">3D-structure</keyword>
<keyword id="KW-0963">Cytoplasm</keyword>
<keyword id="KW-0413">Isomerase</keyword>
<keyword id="KW-1185">Reference proteome</keyword>
<organism>
    <name type="scientific">Yersinia pestis</name>
    <dbReference type="NCBI Taxonomy" id="632"/>
    <lineage>
        <taxon>Bacteria</taxon>
        <taxon>Pseudomonadati</taxon>
        <taxon>Pseudomonadota</taxon>
        <taxon>Gammaproteobacteria</taxon>
        <taxon>Enterobacterales</taxon>
        <taxon>Yersiniaceae</taxon>
        <taxon>Yersinia</taxon>
    </lineage>
</organism>
<reference key="1">
    <citation type="journal article" date="2001" name="Nature">
        <title>Genome sequence of Yersinia pestis, the causative agent of plague.</title>
        <authorList>
            <person name="Parkhill J."/>
            <person name="Wren B.W."/>
            <person name="Thomson N.R."/>
            <person name="Titball R.W."/>
            <person name="Holden M.T.G."/>
            <person name="Prentice M.B."/>
            <person name="Sebaihia M."/>
            <person name="James K.D."/>
            <person name="Churcher C.M."/>
            <person name="Mungall K.L."/>
            <person name="Baker S."/>
            <person name="Basham D."/>
            <person name="Bentley S.D."/>
            <person name="Brooks K."/>
            <person name="Cerdeno-Tarraga A.-M."/>
            <person name="Chillingworth T."/>
            <person name="Cronin A."/>
            <person name="Davies R.M."/>
            <person name="Davis P."/>
            <person name="Dougan G."/>
            <person name="Feltwell T."/>
            <person name="Hamlin N."/>
            <person name="Holroyd S."/>
            <person name="Jagels K."/>
            <person name="Karlyshev A.V."/>
            <person name="Leather S."/>
            <person name="Moule S."/>
            <person name="Oyston P.C.F."/>
            <person name="Quail M.A."/>
            <person name="Rutherford K.M."/>
            <person name="Simmonds M."/>
            <person name="Skelton J."/>
            <person name="Stevens K."/>
            <person name="Whitehead S."/>
            <person name="Barrell B.G."/>
        </authorList>
    </citation>
    <scope>NUCLEOTIDE SEQUENCE [LARGE SCALE GENOMIC DNA]</scope>
    <source>
        <strain>CO-92 / Biovar Orientalis</strain>
    </source>
</reference>
<reference key="2">
    <citation type="journal article" date="2002" name="J. Bacteriol.">
        <title>Genome sequence of Yersinia pestis KIM.</title>
        <authorList>
            <person name="Deng W."/>
            <person name="Burland V."/>
            <person name="Plunkett G. III"/>
            <person name="Boutin A."/>
            <person name="Mayhew G.F."/>
            <person name="Liss P."/>
            <person name="Perna N.T."/>
            <person name="Rose D.J."/>
            <person name="Mau B."/>
            <person name="Zhou S."/>
            <person name="Schwartz D.C."/>
            <person name="Fetherston J.D."/>
            <person name="Lindler L.E."/>
            <person name="Brubaker R.R."/>
            <person name="Plano G.V."/>
            <person name="Straley S.C."/>
            <person name="McDonough K.A."/>
            <person name="Nilles M.L."/>
            <person name="Matson J.S."/>
            <person name="Blattner F.R."/>
            <person name="Perry R.D."/>
        </authorList>
    </citation>
    <scope>NUCLEOTIDE SEQUENCE [LARGE SCALE GENOMIC DNA]</scope>
    <source>
        <strain>KIM10+ / Biovar Mediaevalis</strain>
    </source>
</reference>
<reference key="3">
    <citation type="journal article" date="2004" name="DNA Res.">
        <title>Complete genome sequence of Yersinia pestis strain 91001, an isolate avirulent to humans.</title>
        <authorList>
            <person name="Song Y."/>
            <person name="Tong Z."/>
            <person name="Wang J."/>
            <person name="Wang L."/>
            <person name="Guo Z."/>
            <person name="Han Y."/>
            <person name="Zhang J."/>
            <person name="Pei D."/>
            <person name="Zhou D."/>
            <person name="Qin H."/>
            <person name="Pang X."/>
            <person name="Han Y."/>
            <person name="Zhai J."/>
            <person name="Li M."/>
            <person name="Cui B."/>
            <person name="Qi Z."/>
            <person name="Jin L."/>
            <person name="Dai R."/>
            <person name="Chen F."/>
            <person name="Li S."/>
            <person name="Ye C."/>
            <person name="Du Z."/>
            <person name="Lin W."/>
            <person name="Wang J."/>
            <person name="Yu J."/>
            <person name="Yang H."/>
            <person name="Wang J."/>
            <person name="Huang P."/>
            <person name="Yang R."/>
        </authorList>
    </citation>
    <scope>NUCLEOTIDE SEQUENCE [LARGE SCALE GENOMIC DNA]</scope>
    <source>
        <strain>91001 / Biovar Mediaevalis</strain>
    </source>
</reference>
<reference key="4">
    <citation type="submission" date="2007-04" db="PDB data bank">
        <title>Crystal structure of lsrG from Yersinia pestis.</title>
        <authorList>
            <person name="de Carvalho-Kavanagh M."/>
            <person name="Schafer J."/>
            <person name="Lekin T."/>
            <person name="Toppani D."/>
            <person name="Coleman M."/>
            <person name="Chain P."/>
            <person name="Lao V."/>
            <person name="Zemla A."/>
            <person name="Motin V."/>
            <person name="Garcia E."/>
            <person name="Segelke B."/>
        </authorList>
    </citation>
    <scope>X-RAY CRYSTALLOGRAPHY (1.75 ANGSTROMS)</scope>
    <scope>SUBUNIT</scope>
    <source>
        <strain>D27</strain>
    </source>
</reference>
<gene>
    <name evidence="1" type="primary">lsrG</name>
    <name type="ordered locus">YPO0407</name>
    <name type="ordered locus">y3774</name>
    <name type="ordered locus">YP_3774</name>
</gene>
<dbReference type="EC" id="5.3.1.32" evidence="1"/>
<dbReference type="EMBL" id="AL590842">
    <property type="protein sequence ID" value="CAL19088.1"/>
    <property type="molecule type" value="Genomic_DNA"/>
</dbReference>
<dbReference type="EMBL" id="AE009952">
    <property type="protein sequence ID" value="AAM87319.1"/>
    <property type="molecule type" value="Genomic_DNA"/>
</dbReference>
<dbReference type="EMBL" id="AE017042">
    <property type="protein sequence ID" value="AAS63922.1"/>
    <property type="molecule type" value="Genomic_DNA"/>
</dbReference>
<dbReference type="PIR" id="AF0050">
    <property type="entry name" value="AF0050"/>
</dbReference>
<dbReference type="RefSeq" id="WP_002209186.1">
    <property type="nucleotide sequence ID" value="NZ_WUCM01000002.1"/>
</dbReference>
<dbReference type="RefSeq" id="YP_002345484.1">
    <property type="nucleotide sequence ID" value="NC_003143.1"/>
</dbReference>
<dbReference type="PDB" id="2GFF">
    <property type="method" value="X-ray"/>
    <property type="resolution" value="1.75 A"/>
    <property type="chains" value="A/B=1-96"/>
</dbReference>
<dbReference type="PDBsum" id="2GFF"/>
<dbReference type="SMR" id="Q7CG46"/>
<dbReference type="STRING" id="214092.YPO0407"/>
<dbReference type="PaxDb" id="214092-YPO0407"/>
<dbReference type="DNASU" id="1148721"/>
<dbReference type="EnsemblBacteria" id="AAS63922">
    <property type="protein sequence ID" value="AAS63922"/>
    <property type="gene ID" value="YP_3774"/>
</dbReference>
<dbReference type="GeneID" id="96664050"/>
<dbReference type="KEGG" id="ype:YPO0407"/>
<dbReference type="KEGG" id="ypk:y3774"/>
<dbReference type="KEGG" id="ypm:YP_3774"/>
<dbReference type="PATRIC" id="fig|214092.21.peg.647"/>
<dbReference type="eggNOG" id="COG1359">
    <property type="taxonomic scope" value="Bacteria"/>
</dbReference>
<dbReference type="HOGENOM" id="CLU_131496_3_0_6"/>
<dbReference type="OMA" id="KETAHYQ"/>
<dbReference type="OrthoDB" id="9812754at2"/>
<dbReference type="EvolutionaryTrace" id="Q7CG46"/>
<dbReference type="Proteomes" id="UP000000815">
    <property type="component" value="Chromosome"/>
</dbReference>
<dbReference type="Proteomes" id="UP000001019">
    <property type="component" value="Chromosome"/>
</dbReference>
<dbReference type="Proteomes" id="UP000002490">
    <property type="component" value="Chromosome"/>
</dbReference>
<dbReference type="GO" id="GO:0005829">
    <property type="term" value="C:cytosol"/>
    <property type="evidence" value="ECO:0000318"/>
    <property type="project" value="GO_Central"/>
</dbReference>
<dbReference type="GO" id="GO:0002952">
    <property type="term" value="F:(4S)-4-hydroxy-5-phosphonooxypentane-2,3-dione isomerase activity"/>
    <property type="evidence" value="ECO:0007669"/>
    <property type="project" value="UniProtKB-EC"/>
</dbReference>
<dbReference type="GO" id="GO:0016491">
    <property type="term" value="F:oxidoreductase activity"/>
    <property type="evidence" value="ECO:0000318"/>
    <property type="project" value="GO_Central"/>
</dbReference>
<dbReference type="FunFam" id="3.30.70.100:FF:000016">
    <property type="entry name" value="(4S)-4-hydroxy-5-phosphonooxypentane-2,3-dione isomerase"/>
    <property type="match status" value="1"/>
</dbReference>
<dbReference type="Gene3D" id="3.30.70.100">
    <property type="match status" value="1"/>
</dbReference>
<dbReference type="HAMAP" id="MF_02051">
    <property type="entry name" value="LsrG"/>
    <property type="match status" value="1"/>
</dbReference>
<dbReference type="InterPro" id="IPR007138">
    <property type="entry name" value="ABM_dom"/>
</dbReference>
<dbReference type="InterPro" id="IPR050744">
    <property type="entry name" value="AI-2_Isomerase_LsrG"/>
</dbReference>
<dbReference type="InterPro" id="IPR011008">
    <property type="entry name" value="Dimeric_a/b-barrel"/>
</dbReference>
<dbReference type="InterPro" id="IPR033672">
    <property type="entry name" value="LsrG"/>
</dbReference>
<dbReference type="NCBIfam" id="NF007791">
    <property type="entry name" value="PRK10486.1"/>
    <property type="match status" value="1"/>
</dbReference>
<dbReference type="PANTHER" id="PTHR33336:SF1">
    <property type="entry name" value="(4S)-4-HYDROXY-5-PHOSPHONOOXYPENTANE-2,3-DIONE ISOMERASE"/>
    <property type="match status" value="1"/>
</dbReference>
<dbReference type="PANTHER" id="PTHR33336">
    <property type="entry name" value="QUINOL MONOOXYGENASE YGIN-RELATED"/>
    <property type="match status" value="1"/>
</dbReference>
<dbReference type="Pfam" id="PF03992">
    <property type="entry name" value="ABM"/>
    <property type="match status" value="1"/>
</dbReference>
<dbReference type="SUPFAM" id="SSF54909">
    <property type="entry name" value="Dimeric alpha+beta barrel"/>
    <property type="match status" value="1"/>
</dbReference>
<dbReference type="PROSITE" id="PS51725">
    <property type="entry name" value="ABM"/>
    <property type="match status" value="1"/>
</dbReference>
<evidence type="ECO:0000255" key="1">
    <source>
        <dbReference type="HAMAP-Rule" id="MF_02051"/>
    </source>
</evidence>
<evidence type="ECO:0000305" key="2"/>
<evidence type="ECO:0007829" key="3">
    <source>
        <dbReference type="PDB" id="2GFF"/>
    </source>
</evidence>